<accession>A0Q759</accession>
<evidence type="ECO:0000255" key="1">
    <source>
        <dbReference type="HAMAP-Rule" id="MF_00382"/>
    </source>
</evidence>
<evidence type="ECO:0000305" key="2"/>
<keyword id="KW-0687">Ribonucleoprotein</keyword>
<keyword id="KW-0689">Ribosomal protein</keyword>
<keyword id="KW-0694">RNA-binding</keyword>
<keyword id="KW-0699">rRNA-binding</keyword>
<name>RL20_FRATN</name>
<proteinExistence type="inferred from homology"/>
<sequence>MSRVKRGVTARARHKKVLNQAKGYYGARSRVYRVAKQAVIKAGQYAYRDRKVKKRTFRSLWIVRINAAARQHDISYSQLINGLNKAGIELDRKALAELAVYNKDAFAAVVEKAKAALA</sequence>
<organism>
    <name type="scientific">Francisella tularensis subsp. novicida (strain U112)</name>
    <dbReference type="NCBI Taxonomy" id="401614"/>
    <lineage>
        <taxon>Bacteria</taxon>
        <taxon>Pseudomonadati</taxon>
        <taxon>Pseudomonadota</taxon>
        <taxon>Gammaproteobacteria</taxon>
        <taxon>Thiotrichales</taxon>
        <taxon>Francisellaceae</taxon>
        <taxon>Francisella</taxon>
    </lineage>
</organism>
<dbReference type="EMBL" id="CP000439">
    <property type="protein sequence ID" value="ABK90074.1"/>
    <property type="molecule type" value="Genomic_DNA"/>
</dbReference>
<dbReference type="RefSeq" id="WP_003039888.1">
    <property type="nucleotide sequence ID" value="NZ_CP009633.1"/>
</dbReference>
<dbReference type="SMR" id="A0Q759"/>
<dbReference type="KEGG" id="ftn:FTN_1188"/>
<dbReference type="KEGG" id="ftx:AW25_819"/>
<dbReference type="BioCyc" id="FTUL401614:G1G75-1231-MONOMER"/>
<dbReference type="Proteomes" id="UP000000762">
    <property type="component" value="Chromosome"/>
</dbReference>
<dbReference type="GO" id="GO:1990904">
    <property type="term" value="C:ribonucleoprotein complex"/>
    <property type="evidence" value="ECO:0007669"/>
    <property type="project" value="UniProtKB-KW"/>
</dbReference>
<dbReference type="GO" id="GO:0005840">
    <property type="term" value="C:ribosome"/>
    <property type="evidence" value="ECO:0007669"/>
    <property type="project" value="UniProtKB-KW"/>
</dbReference>
<dbReference type="GO" id="GO:0019843">
    <property type="term" value="F:rRNA binding"/>
    <property type="evidence" value="ECO:0007669"/>
    <property type="project" value="UniProtKB-UniRule"/>
</dbReference>
<dbReference type="GO" id="GO:0003735">
    <property type="term" value="F:structural constituent of ribosome"/>
    <property type="evidence" value="ECO:0007669"/>
    <property type="project" value="InterPro"/>
</dbReference>
<dbReference type="GO" id="GO:0000027">
    <property type="term" value="P:ribosomal large subunit assembly"/>
    <property type="evidence" value="ECO:0007669"/>
    <property type="project" value="UniProtKB-UniRule"/>
</dbReference>
<dbReference type="GO" id="GO:0006412">
    <property type="term" value="P:translation"/>
    <property type="evidence" value="ECO:0007669"/>
    <property type="project" value="InterPro"/>
</dbReference>
<dbReference type="CDD" id="cd07026">
    <property type="entry name" value="Ribosomal_L20"/>
    <property type="match status" value="1"/>
</dbReference>
<dbReference type="FunFam" id="1.10.1900.20:FF:000001">
    <property type="entry name" value="50S ribosomal protein L20"/>
    <property type="match status" value="1"/>
</dbReference>
<dbReference type="Gene3D" id="6.10.160.10">
    <property type="match status" value="1"/>
</dbReference>
<dbReference type="Gene3D" id="1.10.1900.20">
    <property type="entry name" value="Ribosomal protein L20"/>
    <property type="match status" value="1"/>
</dbReference>
<dbReference type="HAMAP" id="MF_00382">
    <property type="entry name" value="Ribosomal_bL20"/>
    <property type="match status" value="1"/>
</dbReference>
<dbReference type="InterPro" id="IPR005813">
    <property type="entry name" value="Ribosomal_bL20"/>
</dbReference>
<dbReference type="InterPro" id="IPR049946">
    <property type="entry name" value="RIBOSOMAL_L20_CS"/>
</dbReference>
<dbReference type="InterPro" id="IPR035566">
    <property type="entry name" value="Ribosomal_protein_bL20_C"/>
</dbReference>
<dbReference type="NCBIfam" id="TIGR01032">
    <property type="entry name" value="rplT_bact"/>
    <property type="match status" value="1"/>
</dbReference>
<dbReference type="PANTHER" id="PTHR10986">
    <property type="entry name" value="39S RIBOSOMAL PROTEIN L20"/>
    <property type="match status" value="1"/>
</dbReference>
<dbReference type="Pfam" id="PF00453">
    <property type="entry name" value="Ribosomal_L20"/>
    <property type="match status" value="1"/>
</dbReference>
<dbReference type="PRINTS" id="PR00062">
    <property type="entry name" value="RIBOSOMALL20"/>
</dbReference>
<dbReference type="SUPFAM" id="SSF74731">
    <property type="entry name" value="Ribosomal protein L20"/>
    <property type="match status" value="1"/>
</dbReference>
<dbReference type="PROSITE" id="PS00937">
    <property type="entry name" value="RIBOSOMAL_L20"/>
    <property type="match status" value="1"/>
</dbReference>
<gene>
    <name evidence="1" type="primary">rplT</name>
    <name type="ordered locus">FTN_1188</name>
</gene>
<feature type="chain" id="PRO_1000048981" description="Large ribosomal subunit protein bL20">
    <location>
        <begin position="1"/>
        <end position="118"/>
    </location>
</feature>
<protein>
    <recommendedName>
        <fullName evidence="1">Large ribosomal subunit protein bL20</fullName>
    </recommendedName>
    <alternativeName>
        <fullName evidence="2">50S ribosomal protein L20</fullName>
    </alternativeName>
</protein>
<comment type="function">
    <text evidence="1">Binds directly to 23S ribosomal RNA and is necessary for the in vitro assembly process of the 50S ribosomal subunit. It is not involved in the protein synthesizing functions of that subunit.</text>
</comment>
<comment type="similarity">
    <text evidence="1">Belongs to the bacterial ribosomal protein bL20 family.</text>
</comment>
<reference key="1">
    <citation type="journal article" date="2007" name="Genome Biol.">
        <title>Comparison of Francisella tularensis genomes reveals evolutionary events associated with the emergence of human pathogenic strains.</title>
        <authorList>
            <person name="Rohmer L."/>
            <person name="Fong C."/>
            <person name="Abmayr S."/>
            <person name="Wasnick M."/>
            <person name="Larson Freeman T.J."/>
            <person name="Radey M."/>
            <person name="Guina T."/>
            <person name="Svensson K."/>
            <person name="Hayden H.S."/>
            <person name="Jacobs M."/>
            <person name="Gallagher L.A."/>
            <person name="Manoil C."/>
            <person name="Ernst R.K."/>
            <person name="Drees B."/>
            <person name="Buckley D."/>
            <person name="Haugen E."/>
            <person name="Bovee D."/>
            <person name="Zhou Y."/>
            <person name="Chang J."/>
            <person name="Levy R."/>
            <person name="Lim R."/>
            <person name="Gillett W."/>
            <person name="Guenthener D."/>
            <person name="Kang A."/>
            <person name="Shaffer S.A."/>
            <person name="Taylor G."/>
            <person name="Chen J."/>
            <person name="Gallis B."/>
            <person name="D'Argenio D.A."/>
            <person name="Forsman M."/>
            <person name="Olson M.V."/>
            <person name="Goodlett D.R."/>
            <person name="Kaul R."/>
            <person name="Miller S.I."/>
            <person name="Brittnacher M.J."/>
        </authorList>
    </citation>
    <scope>NUCLEOTIDE SEQUENCE [LARGE SCALE GENOMIC DNA]</scope>
    <source>
        <strain>U112</strain>
    </source>
</reference>